<comment type="function">
    <text evidence="1">Is required not only for elongation of protein synthesis but also for the initiation of all mRNA translation through initiator tRNA(fMet) aminoacylation.</text>
</comment>
<comment type="catalytic activity">
    <reaction>
        <text>tRNA(Met) + L-methionine + ATP = L-methionyl-tRNA(Met) + AMP + diphosphate</text>
        <dbReference type="Rhea" id="RHEA:13481"/>
        <dbReference type="Rhea" id="RHEA-COMP:9667"/>
        <dbReference type="Rhea" id="RHEA-COMP:9698"/>
        <dbReference type="ChEBI" id="CHEBI:30616"/>
        <dbReference type="ChEBI" id="CHEBI:33019"/>
        <dbReference type="ChEBI" id="CHEBI:57844"/>
        <dbReference type="ChEBI" id="CHEBI:78442"/>
        <dbReference type="ChEBI" id="CHEBI:78530"/>
        <dbReference type="ChEBI" id="CHEBI:456215"/>
        <dbReference type="EC" id="6.1.1.10"/>
    </reaction>
</comment>
<comment type="subunit">
    <text evidence="1">Homodimer.</text>
</comment>
<comment type="subcellular location">
    <subcellularLocation>
        <location evidence="1">Cytoplasm</location>
    </subcellularLocation>
</comment>
<comment type="similarity">
    <text evidence="3">Belongs to the class-I aminoacyl-tRNA synthetase family. MetG type 2B subfamily.</text>
</comment>
<keyword id="KW-0030">Aminoacyl-tRNA synthetase</keyword>
<keyword id="KW-0067">ATP-binding</keyword>
<keyword id="KW-0963">Cytoplasm</keyword>
<keyword id="KW-0436">Ligase</keyword>
<keyword id="KW-0547">Nucleotide-binding</keyword>
<keyword id="KW-0648">Protein biosynthesis</keyword>
<keyword id="KW-1185">Reference proteome</keyword>
<keyword id="KW-0694">RNA-binding</keyword>
<keyword id="KW-0820">tRNA-binding</keyword>
<sequence>MQNPPQHPEAQSPETRDREFFITAAIDYANGTPHIGHVYEKILADAIARYQRLAGRDVTFVMGTDEHGEKISKAAAKGGVTPQELVDDLSERAFQGLWKKLGISYDFFIRTTSAKHKKYVQDVLQRVYDAGDIYFAEYEGLYSVGAERYVTEKELVEGPDGVRRFPGDKDPPELRREANYFFNMQKYQPWLLETLQQNPDLIQPAGYRNEVLEMLKEDIGPLSISRPKARVPWGIELPWDTDHVTYVWFDALLSYLTPLVSQGQDASMSGKAWHVIGKDILKPHAVFWPTMLRAAGLPLYRRLVVHSHILAEDGRKMGKSLGNAIDPEELVAAWPVDAIRYALLREASLGADSPFGEGVLVSRLNSDLANDLGNLLSRTVSMIQKYRGGVIPAATEPTDREREIEAAARALPDEVLRLVDELKINMAIDAAMSFVRDLNRYIAESTPWTLAKSPETQGRLDTVLYTAAEGLRVASVALEAVIPTKAKELREQLGLGRQGYPLQAAWGLTPAGTRVQGGAILFPKPEPKADETKNAEAKPPKPQAKKEKKTVTDTAPAKTTEQKPEAAAPAQNDGLISIDDFAKIDLRIAEVVACEAVEKADKLLKLTVKLGDETRTVVSGIRKWYEPEALVGRKVVLVANLKPAKLRGIESQGMILAAEDDAGNLDLVGTELDLPSGTKVR</sequence>
<dbReference type="EC" id="6.1.1.10"/>
<dbReference type="EMBL" id="AE000513">
    <property type="protein sequence ID" value="AAF11005.1"/>
    <property type="molecule type" value="Genomic_DNA"/>
</dbReference>
<dbReference type="PIR" id="C75395">
    <property type="entry name" value="C75395"/>
</dbReference>
<dbReference type="RefSeq" id="NP_295156.1">
    <property type="nucleotide sequence ID" value="NC_001263.1"/>
</dbReference>
<dbReference type="RefSeq" id="WP_010888072.1">
    <property type="nucleotide sequence ID" value="NC_001263.1"/>
</dbReference>
<dbReference type="SMR" id="Q9RUF3"/>
<dbReference type="FunCoup" id="Q9RUF3">
    <property type="interactions" value="420"/>
</dbReference>
<dbReference type="STRING" id="243230.DR_1433"/>
<dbReference type="PaxDb" id="243230-DR_1433"/>
<dbReference type="EnsemblBacteria" id="AAF11005">
    <property type="protein sequence ID" value="AAF11005"/>
    <property type="gene ID" value="DR_1433"/>
</dbReference>
<dbReference type="GeneID" id="69517674"/>
<dbReference type="KEGG" id="dra:DR_1433"/>
<dbReference type="PATRIC" id="fig|243230.17.peg.1629"/>
<dbReference type="eggNOG" id="COG0073">
    <property type="taxonomic scope" value="Bacteria"/>
</dbReference>
<dbReference type="eggNOG" id="COG0143">
    <property type="taxonomic scope" value="Bacteria"/>
</dbReference>
<dbReference type="HOGENOM" id="CLU_009710_9_4_0"/>
<dbReference type="InParanoid" id="Q9RUF3"/>
<dbReference type="OrthoDB" id="9810191at2"/>
<dbReference type="Proteomes" id="UP000002524">
    <property type="component" value="Chromosome 1"/>
</dbReference>
<dbReference type="GO" id="GO:0005737">
    <property type="term" value="C:cytoplasm"/>
    <property type="evidence" value="ECO:0007669"/>
    <property type="project" value="UniProtKB-SubCell"/>
</dbReference>
<dbReference type="GO" id="GO:0005524">
    <property type="term" value="F:ATP binding"/>
    <property type="evidence" value="ECO:0007669"/>
    <property type="project" value="UniProtKB-UniRule"/>
</dbReference>
<dbReference type="GO" id="GO:0004825">
    <property type="term" value="F:methionine-tRNA ligase activity"/>
    <property type="evidence" value="ECO:0000318"/>
    <property type="project" value="GO_Central"/>
</dbReference>
<dbReference type="GO" id="GO:0000049">
    <property type="term" value="F:tRNA binding"/>
    <property type="evidence" value="ECO:0007669"/>
    <property type="project" value="UniProtKB-KW"/>
</dbReference>
<dbReference type="GO" id="GO:0006431">
    <property type="term" value="P:methionyl-tRNA aminoacylation"/>
    <property type="evidence" value="ECO:0000318"/>
    <property type="project" value="GO_Central"/>
</dbReference>
<dbReference type="CDD" id="cd07957">
    <property type="entry name" value="Anticodon_Ia_Met"/>
    <property type="match status" value="1"/>
</dbReference>
<dbReference type="CDD" id="cd00814">
    <property type="entry name" value="MetRS_core"/>
    <property type="match status" value="1"/>
</dbReference>
<dbReference type="CDD" id="cd02800">
    <property type="entry name" value="tRNA_bind_EcMetRS_like"/>
    <property type="match status" value="1"/>
</dbReference>
<dbReference type="FunFam" id="1.10.730.10:FF:000026">
    <property type="entry name" value="Methionine--tRNA ligase"/>
    <property type="match status" value="1"/>
</dbReference>
<dbReference type="FunFam" id="2.170.220.10:FF:000003">
    <property type="entry name" value="Methionine--tRNA ligase"/>
    <property type="match status" value="1"/>
</dbReference>
<dbReference type="FunFam" id="2.40.50.140:FF:000042">
    <property type="entry name" value="Methionine--tRNA ligase"/>
    <property type="match status" value="1"/>
</dbReference>
<dbReference type="Gene3D" id="2.170.220.10">
    <property type="match status" value="1"/>
</dbReference>
<dbReference type="Gene3D" id="3.40.50.620">
    <property type="entry name" value="HUPs"/>
    <property type="match status" value="1"/>
</dbReference>
<dbReference type="Gene3D" id="1.10.730.10">
    <property type="entry name" value="Isoleucyl-tRNA Synthetase, Domain 1"/>
    <property type="match status" value="1"/>
</dbReference>
<dbReference type="Gene3D" id="2.40.50.140">
    <property type="entry name" value="Nucleic acid-binding proteins"/>
    <property type="match status" value="1"/>
</dbReference>
<dbReference type="HAMAP" id="MF_01228">
    <property type="entry name" value="Met_tRNA_synth_type2"/>
    <property type="match status" value="1"/>
</dbReference>
<dbReference type="InterPro" id="IPR041872">
    <property type="entry name" value="Anticodon_Met"/>
</dbReference>
<dbReference type="InterPro" id="IPR004495">
    <property type="entry name" value="Met-tRNA-synth_bsu_C"/>
</dbReference>
<dbReference type="InterPro" id="IPR014758">
    <property type="entry name" value="Met-tRNA_synth"/>
</dbReference>
<dbReference type="InterPro" id="IPR023457">
    <property type="entry name" value="Met-tRNA_synth_2"/>
</dbReference>
<dbReference type="InterPro" id="IPR015413">
    <property type="entry name" value="Methionyl/Leucyl_tRNA_Synth"/>
</dbReference>
<dbReference type="InterPro" id="IPR033911">
    <property type="entry name" value="MetRS_core"/>
</dbReference>
<dbReference type="InterPro" id="IPR012340">
    <property type="entry name" value="NA-bd_OB-fold"/>
</dbReference>
<dbReference type="InterPro" id="IPR014729">
    <property type="entry name" value="Rossmann-like_a/b/a_fold"/>
</dbReference>
<dbReference type="InterPro" id="IPR002547">
    <property type="entry name" value="tRNA-bd_dom"/>
</dbReference>
<dbReference type="InterPro" id="IPR009080">
    <property type="entry name" value="tRNAsynth_Ia_anticodon-bd"/>
</dbReference>
<dbReference type="NCBIfam" id="TIGR00398">
    <property type="entry name" value="metG"/>
    <property type="match status" value="1"/>
</dbReference>
<dbReference type="NCBIfam" id="TIGR00399">
    <property type="entry name" value="metG_C_term"/>
    <property type="match status" value="1"/>
</dbReference>
<dbReference type="NCBIfam" id="NF008900">
    <property type="entry name" value="PRK12267.1"/>
    <property type="match status" value="1"/>
</dbReference>
<dbReference type="PANTHER" id="PTHR43326:SF1">
    <property type="entry name" value="METHIONINE--TRNA LIGASE, MITOCHONDRIAL"/>
    <property type="match status" value="1"/>
</dbReference>
<dbReference type="PANTHER" id="PTHR43326">
    <property type="entry name" value="METHIONYL-TRNA SYNTHETASE"/>
    <property type="match status" value="1"/>
</dbReference>
<dbReference type="Pfam" id="PF09334">
    <property type="entry name" value="tRNA-synt_1g"/>
    <property type="match status" value="2"/>
</dbReference>
<dbReference type="Pfam" id="PF01588">
    <property type="entry name" value="tRNA_bind"/>
    <property type="match status" value="1"/>
</dbReference>
<dbReference type="PRINTS" id="PR01041">
    <property type="entry name" value="TRNASYNTHMET"/>
</dbReference>
<dbReference type="SUPFAM" id="SSF47323">
    <property type="entry name" value="Anticodon-binding domain of a subclass of class I aminoacyl-tRNA synthetases"/>
    <property type="match status" value="1"/>
</dbReference>
<dbReference type="SUPFAM" id="SSF50249">
    <property type="entry name" value="Nucleic acid-binding proteins"/>
    <property type="match status" value="1"/>
</dbReference>
<dbReference type="SUPFAM" id="SSF52374">
    <property type="entry name" value="Nucleotidylyl transferase"/>
    <property type="match status" value="1"/>
</dbReference>
<dbReference type="PROSITE" id="PS50886">
    <property type="entry name" value="TRBD"/>
    <property type="match status" value="1"/>
</dbReference>
<gene>
    <name type="primary">metG</name>
    <name type="ordered locus">DR_1433</name>
</gene>
<feature type="chain" id="PRO_0000139218" description="Methionine--tRNA ligase">
    <location>
        <begin position="1"/>
        <end position="681"/>
    </location>
</feature>
<feature type="domain" description="tRNA-binding">
    <location>
        <begin position="580"/>
        <end position="681"/>
    </location>
</feature>
<feature type="region of interest" description="Disordered" evidence="2">
    <location>
        <begin position="522"/>
        <end position="571"/>
    </location>
</feature>
<feature type="short sequence motif" description="'HIGH' region">
    <location>
        <begin position="27"/>
        <end position="37"/>
    </location>
</feature>
<feature type="short sequence motif" description="'KMSKS' region">
    <location>
        <begin position="316"/>
        <end position="320"/>
    </location>
</feature>
<feature type="compositionally biased region" description="Basic and acidic residues" evidence="2">
    <location>
        <begin position="525"/>
        <end position="539"/>
    </location>
</feature>
<feature type="binding site" evidence="1">
    <location>
        <position position="319"/>
    </location>
    <ligand>
        <name>ATP</name>
        <dbReference type="ChEBI" id="CHEBI:30616"/>
    </ligand>
</feature>
<proteinExistence type="inferred from homology"/>
<evidence type="ECO:0000250" key="1"/>
<evidence type="ECO:0000256" key="2">
    <source>
        <dbReference type="SAM" id="MobiDB-lite"/>
    </source>
</evidence>
<evidence type="ECO:0000305" key="3"/>
<reference key="1">
    <citation type="journal article" date="1999" name="Science">
        <title>Genome sequence of the radioresistant bacterium Deinococcus radiodurans R1.</title>
        <authorList>
            <person name="White O."/>
            <person name="Eisen J.A."/>
            <person name="Heidelberg J.F."/>
            <person name="Hickey E.K."/>
            <person name="Peterson J.D."/>
            <person name="Dodson R.J."/>
            <person name="Haft D.H."/>
            <person name="Gwinn M.L."/>
            <person name="Nelson W.C."/>
            <person name="Richardson D.L."/>
            <person name="Moffat K.S."/>
            <person name="Qin H."/>
            <person name="Jiang L."/>
            <person name="Pamphile W."/>
            <person name="Crosby M."/>
            <person name="Shen M."/>
            <person name="Vamathevan J.J."/>
            <person name="Lam P."/>
            <person name="McDonald L.A."/>
            <person name="Utterback T.R."/>
            <person name="Zalewski C."/>
            <person name="Makarova K.S."/>
            <person name="Aravind L."/>
            <person name="Daly M.J."/>
            <person name="Minton K.W."/>
            <person name="Fleischmann R.D."/>
            <person name="Ketchum K.A."/>
            <person name="Nelson K.E."/>
            <person name="Salzberg S.L."/>
            <person name="Smith H.O."/>
            <person name="Venter J.C."/>
            <person name="Fraser C.M."/>
        </authorList>
    </citation>
    <scope>NUCLEOTIDE SEQUENCE [LARGE SCALE GENOMIC DNA]</scope>
    <source>
        <strain>ATCC 13939 / DSM 20539 / JCM 16871 / CCUG 27074 / LMG 4051 / NBRC 15346 / NCIMB 9279 / VKM B-1422 / R1</strain>
    </source>
</reference>
<protein>
    <recommendedName>
        <fullName>Methionine--tRNA ligase</fullName>
        <ecNumber>6.1.1.10</ecNumber>
    </recommendedName>
    <alternativeName>
        <fullName>Methionyl-tRNA synthetase</fullName>
        <shortName>MetRS</shortName>
    </alternativeName>
</protein>
<name>SYM_DEIRA</name>
<organism>
    <name type="scientific">Deinococcus radiodurans (strain ATCC 13939 / DSM 20539 / JCM 16871 / CCUG 27074 / LMG 4051 / NBRC 15346 / NCIMB 9279 / VKM B-1422 / R1)</name>
    <dbReference type="NCBI Taxonomy" id="243230"/>
    <lineage>
        <taxon>Bacteria</taxon>
        <taxon>Thermotogati</taxon>
        <taxon>Deinococcota</taxon>
        <taxon>Deinococci</taxon>
        <taxon>Deinococcales</taxon>
        <taxon>Deinococcaceae</taxon>
        <taxon>Deinococcus</taxon>
    </lineage>
</organism>
<accession>Q9RUF3</accession>